<gene>
    <name evidence="1" type="primary">rpsI</name>
    <name type="ordered locus">NMA0379</name>
</gene>
<protein>
    <recommendedName>
        <fullName evidence="1">Small ribosomal subunit protein uS9</fullName>
    </recommendedName>
    <alternativeName>
        <fullName evidence="2">30S ribosomal protein S9</fullName>
    </alternativeName>
</protein>
<accession>P66641</accession>
<accession>A1IPK2</accession>
<accession>Q9JQZ9</accession>
<proteinExistence type="inferred from homology"/>
<comment type="similarity">
    <text evidence="1">Belongs to the universal ribosomal protein uS9 family.</text>
</comment>
<sequence>MNGKYYYGTGRRKSSVARVFLIKGTGQIIVNGRPVDEFFARETSRMVVRQPLVLTENAESFDIKVNVVGGGETGQSGAIRHGITRALIDFDAALKPALSQAGFVTRDAREVERKKPGLRKARRAKQFSKR</sequence>
<name>RS9_NEIMA</name>
<organism>
    <name type="scientific">Neisseria meningitidis serogroup A / serotype 4A (strain DSM 15465 / Z2491)</name>
    <dbReference type="NCBI Taxonomy" id="122587"/>
    <lineage>
        <taxon>Bacteria</taxon>
        <taxon>Pseudomonadati</taxon>
        <taxon>Pseudomonadota</taxon>
        <taxon>Betaproteobacteria</taxon>
        <taxon>Neisseriales</taxon>
        <taxon>Neisseriaceae</taxon>
        <taxon>Neisseria</taxon>
    </lineage>
</organism>
<keyword id="KW-0687">Ribonucleoprotein</keyword>
<keyword id="KW-0689">Ribosomal protein</keyword>
<feature type="chain" id="PRO_0000111381" description="Small ribosomal subunit protein uS9">
    <location>
        <begin position="1"/>
        <end position="130"/>
    </location>
</feature>
<dbReference type="EMBL" id="AL157959">
    <property type="protein sequence ID" value="CAM07672.1"/>
    <property type="molecule type" value="Genomic_DNA"/>
</dbReference>
<dbReference type="RefSeq" id="WP_002215008.1">
    <property type="nucleotide sequence ID" value="NC_003116.1"/>
</dbReference>
<dbReference type="SMR" id="P66641"/>
<dbReference type="EnsemblBacteria" id="CAM07672">
    <property type="protein sequence ID" value="CAM07672"/>
    <property type="gene ID" value="NMA0379"/>
</dbReference>
<dbReference type="GeneID" id="93386983"/>
<dbReference type="KEGG" id="nma:NMA0379"/>
<dbReference type="HOGENOM" id="CLU_046483_2_1_4"/>
<dbReference type="Proteomes" id="UP000000626">
    <property type="component" value="Chromosome"/>
</dbReference>
<dbReference type="GO" id="GO:0022627">
    <property type="term" value="C:cytosolic small ribosomal subunit"/>
    <property type="evidence" value="ECO:0007669"/>
    <property type="project" value="TreeGrafter"/>
</dbReference>
<dbReference type="GO" id="GO:0003723">
    <property type="term" value="F:RNA binding"/>
    <property type="evidence" value="ECO:0007669"/>
    <property type="project" value="TreeGrafter"/>
</dbReference>
<dbReference type="GO" id="GO:0003735">
    <property type="term" value="F:structural constituent of ribosome"/>
    <property type="evidence" value="ECO:0007669"/>
    <property type="project" value="InterPro"/>
</dbReference>
<dbReference type="GO" id="GO:0006412">
    <property type="term" value="P:translation"/>
    <property type="evidence" value="ECO:0007669"/>
    <property type="project" value="UniProtKB-UniRule"/>
</dbReference>
<dbReference type="FunFam" id="3.30.230.10:FF:000001">
    <property type="entry name" value="30S ribosomal protein S9"/>
    <property type="match status" value="1"/>
</dbReference>
<dbReference type="Gene3D" id="3.30.230.10">
    <property type="match status" value="1"/>
</dbReference>
<dbReference type="HAMAP" id="MF_00532_B">
    <property type="entry name" value="Ribosomal_uS9_B"/>
    <property type="match status" value="1"/>
</dbReference>
<dbReference type="InterPro" id="IPR020568">
    <property type="entry name" value="Ribosomal_Su5_D2-typ_SF"/>
</dbReference>
<dbReference type="InterPro" id="IPR000754">
    <property type="entry name" value="Ribosomal_uS9"/>
</dbReference>
<dbReference type="InterPro" id="IPR023035">
    <property type="entry name" value="Ribosomal_uS9_bac/plastid"/>
</dbReference>
<dbReference type="InterPro" id="IPR020574">
    <property type="entry name" value="Ribosomal_uS9_CS"/>
</dbReference>
<dbReference type="InterPro" id="IPR014721">
    <property type="entry name" value="Ribsml_uS5_D2-typ_fold_subgr"/>
</dbReference>
<dbReference type="NCBIfam" id="NF001099">
    <property type="entry name" value="PRK00132.1"/>
    <property type="match status" value="1"/>
</dbReference>
<dbReference type="PANTHER" id="PTHR21569">
    <property type="entry name" value="RIBOSOMAL PROTEIN S9"/>
    <property type="match status" value="1"/>
</dbReference>
<dbReference type="PANTHER" id="PTHR21569:SF1">
    <property type="entry name" value="SMALL RIBOSOMAL SUBUNIT PROTEIN US9M"/>
    <property type="match status" value="1"/>
</dbReference>
<dbReference type="Pfam" id="PF00380">
    <property type="entry name" value="Ribosomal_S9"/>
    <property type="match status" value="1"/>
</dbReference>
<dbReference type="SUPFAM" id="SSF54211">
    <property type="entry name" value="Ribosomal protein S5 domain 2-like"/>
    <property type="match status" value="1"/>
</dbReference>
<dbReference type="PROSITE" id="PS00360">
    <property type="entry name" value="RIBOSOMAL_S9"/>
    <property type="match status" value="1"/>
</dbReference>
<reference key="1">
    <citation type="journal article" date="2000" name="Nature">
        <title>Complete DNA sequence of a serogroup A strain of Neisseria meningitidis Z2491.</title>
        <authorList>
            <person name="Parkhill J."/>
            <person name="Achtman M."/>
            <person name="James K.D."/>
            <person name="Bentley S.D."/>
            <person name="Churcher C.M."/>
            <person name="Klee S.R."/>
            <person name="Morelli G."/>
            <person name="Basham D."/>
            <person name="Brown D."/>
            <person name="Chillingworth T."/>
            <person name="Davies R.M."/>
            <person name="Davis P."/>
            <person name="Devlin K."/>
            <person name="Feltwell T."/>
            <person name="Hamlin N."/>
            <person name="Holroyd S."/>
            <person name="Jagels K."/>
            <person name="Leather S."/>
            <person name="Moule S."/>
            <person name="Mungall K.L."/>
            <person name="Quail M.A."/>
            <person name="Rajandream M.A."/>
            <person name="Rutherford K.M."/>
            <person name="Simmonds M."/>
            <person name="Skelton J."/>
            <person name="Whitehead S."/>
            <person name="Spratt B.G."/>
            <person name="Barrell B.G."/>
        </authorList>
    </citation>
    <scope>NUCLEOTIDE SEQUENCE [LARGE SCALE GENOMIC DNA]</scope>
    <source>
        <strain>DSM 15465 / Z2491</strain>
    </source>
</reference>
<evidence type="ECO:0000255" key="1">
    <source>
        <dbReference type="HAMAP-Rule" id="MF_00532"/>
    </source>
</evidence>
<evidence type="ECO:0000305" key="2"/>